<name>BGL08_ARATH</name>
<gene>
    <name evidence="7" type="primary">BGLU8</name>
    <name evidence="9" type="ordered locus">At3g62750</name>
    <name evidence="10" type="ORF">F26K9.180</name>
</gene>
<feature type="signal peptide" evidence="5">
    <location>
        <begin position="1"/>
        <end position="22"/>
    </location>
</feature>
<feature type="chain" id="PRO_0000389570" description="Beta-glucosidase 8">
    <location>
        <begin position="23"/>
        <end position="497"/>
    </location>
</feature>
<feature type="active site" description="Proton donor" evidence="3">
    <location>
        <position position="185"/>
    </location>
</feature>
<feature type="active site" description="Nucleophile" evidence="3">
    <location>
        <position position="387"/>
    </location>
</feature>
<feature type="binding site" evidence="3">
    <location>
        <position position="42"/>
    </location>
    <ligand>
        <name>a beta-D-glucoside</name>
        <dbReference type="ChEBI" id="CHEBI:22798"/>
    </ligand>
</feature>
<feature type="binding site" evidence="3">
    <location>
        <position position="139"/>
    </location>
    <ligand>
        <name>a beta-D-glucoside</name>
        <dbReference type="ChEBI" id="CHEBI:22798"/>
    </ligand>
</feature>
<feature type="binding site" evidence="3">
    <location>
        <begin position="184"/>
        <end position="185"/>
    </location>
    <ligand>
        <name>a beta-D-glucoside</name>
        <dbReference type="ChEBI" id="CHEBI:22798"/>
    </ligand>
</feature>
<feature type="binding site" evidence="3">
    <location>
        <position position="319"/>
    </location>
    <ligand>
        <name>a beta-D-glucoside</name>
        <dbReference type="ChEBI" id="CHEBI:22798"/>
    </ligand>
</feature>
<feature type="binding site" evidence="4">
    <location>
        <position position="387"/>
    </location>
    <ligand>
        <name>a beta-D-glucoside</name>
        <dbReference type="ChEBI" id="CHEBI:22798"/>
    </ligand>
</feature>
<feature type="binding site" evidence="3">
    <location>
        <position position="430"/>
    </location>
    <ligand>
        <name>a beta-D-glucoside</name>
        <dbReference type="ChEBI" id="CHEBI:22798"/>
    </ligand>
</feature>
<feature type="binding site" evidence="2">
    <location>
        <position position="446"/>
    </location>
    <ligand>
        <name>a beta-D-glucoside</name>
        <dbReference type="ChEBI" id="CHEBI:22798"/>
    </ligand>
</feature>
<feature type="glycosylation site" description="N-linked (GlcNAc...) asparagine" evidence="6">
    <location>
        <position position="65"/>
    </location>
</feature>
<feature type="glycosylation site" description="N-linked (GlcNAc...) asparagine" evidence="6">
    <location>
        <position position="202"/>
    </location>
</feature>
<feature type="glycosylation site" description="N-linked (GlcNAc...) asparagine" evidence="6">
    <location>
        <position position="354"/>
    </location>
</feature>
<feature type="glycosylation site" description="N-linked (GlcNAc...) asparagine" evidence="6">
    <location>
        <position position="452"/>
    </location>
</feature>
<feature type="glycosylation site" description="N-linked (GlcNAc...) asparagine" evidence="6">
    <location>
        <position position="474"/>
    </location>
</feature>
<feature type="glycosylation site" description="N-linked (GlcNAc...) asparagine" evidence="6">
    <location>
        <position position="490"/>
    </location>
</feature>
<keyword id="KW-0325">Glycoprotein</keyword>
<keyword id="KW-0326">Glycosidase</keyword>
<keyword id="KW-0378">Hydrolase</keyword>
<keyword id="KW-1185">Reference proteome</keyword>
<keyword id="KW-0732">Signal</keyword>
<organism>
    <name type="scientific">Arabidopsis thaliana</name>
    <name type="common">Mouse-ear cress</name>
    <dbReference type="NCBI Taxonomy" id="3702"/>
    <lineage>
        <taxon>Eukaryota</taxon>
        <taxon>Viridiplantae</taxon>
        <taxon>Streptophyta</taxon>
        <taxon>Embryophyta</taxon>
        <taxon>Tracheophyta</taxon>
        <taxon>Spermatophyta</taxon>
        <taxon>Magnoliopsida</taxon>
        <taxon>eudicotyledons</taxon>
        <taxon>Gunneridae</taxon>
        <taxon>Pentapetalae</taxon>
        <taxon>rosids</taxon>
        <taxon>malvids</taxon>
        <taxon>Brassicales</taxon>
        <taxon>Brassicaceae</taxon>
        <taxon>Camelineae</taxon>
        <taxon>Arabidopsis</taxon>
    </lineage>
</organism>
<accession>Q67XN2</accession>
<accession>Q67XI6</accession>
<accession>Q9LZJ0</accession>
<reference key="1">
    <citation type="journal article" date="2000" name="Nature">
        <title>Sequence and analysis of chromosome 3 of the plant Arabidopsis thaliana.</title>
        <authorList>
            <person name="Salanoubat M."/>
            <person name="Lemcke K."/>
            <person name="Rieger M."/>
            <person name="Ansorge W."/>
            <person name="Unseld M."/>
            <person name="Fartmann B."/>
            <person name="Valle G."/>
            <person name="Bloecker H."/>
            <person name="Perez-Alonso M."/>
            <person name="Obermaier B."/>
            <person name="Delseny M."/>
            <person name="Boutry M."/>
            <person name="Grivell L.A."/>
            <person name="Mache R."/>
            <person name="Puigdomenech P."/>
            <person name="De Simone V."/>
            <person name="Choisne N."/>
            <person name="Artiguenave F."/>
            <person name="Robert C."/>
            <person name="Brottier P."/>
            <person name="Wincker P."/>
            <person name="Cattolico L."/>
            <person name="Weissenbach J."/>
            <person name="Saurin W."/>
            <person name="Quetier F."/>
            <person name="Schaefer M."/>
            <person name="Mueller-Auer S."/>
            <person name="Gabel C."/>
            <person name="Fuchs M."/>
            <person name="Benes V."/>
            <person name="Wurmbach E."/>
            <person name="Drzonek H."/>
            <person name="Erfle H."/>
            <person name="Jordan N."/>
            <person name="Bangert S."/>
            <person name="Wiedelmann R."/>
            <person name="Kranz H."/>
            <person name="Voss H."/>
            <person name="Holland R."/>
            <person name="Brandt P."/>
            <person name="Nyakatura G."/>
            <person name="Vezzi A."/>
            <person name="D'Angelo M."/>
            <person name="Pallavicini A."/>
            <person name="Toppo S."/>
            <person name="Simionati B."/>
            <person name="Conrad A."/>
            <person name="Hornischer K."/>
            <person name="Kauer G."/>
            <person name="Loehnert T.-H."/>
            <person name="Nordsiek G."/>
            <person name="Reichelt J."/>
            <person name="Scharfe M."/>
            <person name="Schoen O."/>
            <person name="Bargues M."/>
            <person name="Terol J."/>
            <person name="Climent J."/>
            <person name="Navarro P."/>
            <person name="Collado C."/>
            <person name="Perez-Perez A."/>
            <person name="Ottenwaelder B."/>
            <person name="Duchemin D."/>
            <person name="Cooke R."/>
            <person name="Laudie M."/>
            <person name="Berger-Llauro C."/>
            <person name="Purnelle B."/>
            <person name="Masuy D."/>
            <person name="de Haan M."/>
            <person name="Maarse A.C."/>
            <person name="Alcaraz J.-P."/>
            <person name="Cottet A."/>
            <person name="Casacuberta E."/>
            <person name="Monfort A."/>
            <person name="Argiriou A."/>
            <person name="Flores M."/>
            <person name="Liguori R."/>
            <person name="Vitale D."/>
            <person name="Mannhaupt G."/>
            <person name="Haase D."/>
            <person name="Schoof H."/>
            <person name="Rudd S."/>
            <person name="Zaccaria P."/>
            <person name="Mewes H.-W."/>
            <person name="Mayer K.F.X."/>
            <person name="Kaul S."/>
            <person name="Town C.D."/>
            <person name="Koo H.L."/>
            <person name="Tallon L.J."/>
            <person name="Jenkins J."/>
            <person name="Rooney T."/>
            <person name="Rizzo M."/>
            <person name="Walts A."/>
            <person name="Utterback T."/>
            <person name="Fujii C.Y."/>
            <person name="Shea T.P."/>
            <person name="Creasy T.H."/>
            <person name="Haas B."/>
            <person name="Maiti R."/>
            <person name="Wu D."/>
            <person name="Peterson J."/>
            <person name="Van Aken S."/>
            <person name="Pai G."/>
            <person name="Militscher J."/>
            <person name="Sellers P."/>
            <person name="Gill J.E."/>
            <person name="Feldblyum T.V."/>
            <person name="Preuss D."/>
            <person name="Lin X."/>
            <person name="Nierman W.C."/>
            <person name="Salzberg S.L."/>
            <person name="White O."/>
            <person name="Venter J.C."/>
            <person name="Fraser C.M."/>
            <person name="Kaneko T."/>
            <person name="Nakamura Y."/>
            <person name="Sato S."/>
            <person name="Kato T."/>
            <person name="Asamizu E."/>
            <person name="Sasamoto S."/>
            <person name="Kimura T."/>
            <person name="Idesawa K."/>
            <person name="Kawashima K."/>
            <person name="Kishida Y."/>
            <person name="Kiyokawa C."/>
            <person name="Kohara M."/>
            <person name="Matsumoto M."/>
            <person name="Matsuno A."/>
            <person name="Muraki A."/>
            <person name="Nakayama S."/>
            <person name="Nakazaki N."/>
            <person name="Shinpo S."/>
            <person name="Takeuchi C."/>
            <person name="Wada T."/>
            <person name="Watanabe A."/>
            <person name="Yamada M."/>
            <person name="Yasuda M."/>
            <person name="Tabata S."/>
        </authorList>
    </citation>
    <scope>NUCLEOTIDE SEQUENCE [LARGE SCALE GENOMIC DNA]</scope>
    <source>
        <strain>cv. Columbia</strain>
    </source>
</reference>
<reference key="2">
    <citation type="journal article" date="2017" name="Plant J.">
        <title>Araport11: a complete reannotation of the Arabidopsis thaliana reference genome.</title>
        <authorList>
            <person name="Cheng C.Y."/>
            <person name="Krishnakumar V."/>
            <person name="Chan A.P."/>
            <person name="Thibaud-Nissen F."/>
            <person name="Schobel S."/>
            <person name="Town C.D."/>
        </authorList>
    </citation>
    <scope>GENOME REANNOTATION</scope>
    <source>
        <strain>cv. Columbia</strain>
    </source>
</reference>
<reference key="3">
    <citation type="submission" date="2004-09" db="EMBL/GenBank/DDBJ databases">
        <title>Large-scale analysis of RIKEN Arabidopsis full-length (RAFL) cDNAs.</title>
        <authorList>
            <person name="Totoki Y."/>
            <person name="Seki M."/>
            <person name="Ishida J."/>
            <person name="Nakajima M."/>
            <person name="Enju A."/>
            <person name="Kamiya A."/>
            <person name="Narusaka M."/>
            <person name="Shin-i T."/>
            <person name="Nakagawa M."/>
            <person name="Sakamoto N."/>
            <person name="Oishi K."/>
            <person name="Kohara Y."/>
            <person name="Kobayashi M."/>
            <person name="Toyoda A."/>
            <person name="Sakaki Y."/>
            <person name="Sakurai T."/>
            <person name="Iida K."/>
            <person name="Akiyama K."/>
            <person name="Satou M."/>
            <person name="Toyoda T."/>
            <person name="Konagaya A."/>
            <person name="Carninci P."/>
            <person name="Kawai J."/>
            <person name="Hayashizaki Y."/>
            <person name="Shinozaki K."/>
        </authorList>
    </citation>
    <scope>NUCLEOTIDE SEQUENCE [LARGE SCALE MRNA]</scope>
    <source>
        <strain>cv. Columbia</strain>
    </source>
</reference>
<reference key="4">
    <citation type="journal article" date="2004" name="Plant Mol. Biol.">
        <title>Functional genomic analysis of Arabidopsis thaliana glycoside hydrolase family 1.</title>
        <authorList>
            <person name="Xu Z."/>
            <person name="Escamilla-Trevino L.L."/>
            <person name="Zeng L."/>
            <person name="Lalgondar M."/>
            <person name="Bevan D.R."/>
            <person name="Winkel B.S.J."/>
            <person name="Mohamed A."/>
            <person name="Cheng C.-L."/>
            <person name="Shih M.-C."/>
            <person name="Poulton J.E."/>
            <person name="Esen A."/>
        </authorList>
    </citation>
    <scope>GENE FAMILY</scope>
    <scope>NOMENCLATURE</scope>
</reference>
<comment type="catalytic activity">
    <reaction evidence="1">
        <text>Hydrolysis of terminal, non-reducing beta-D-glucosyl residues with release of beta-D-glucose.</text>
        <dbReference type="EC" id="3.2.1.21"/>
    </reaction>
</comment>
<comment type="similarity">
    <text evidence="8">Belongs to the glycosyl hydrolase 1 family.</text>
</comment>
<comment type="sequence caution" evidence="8">
    <conflict type="frameshift">
        <sequence resource="EMBL-CDS" id="BAD44596"/>
    </conflict>
</comment>
<comment type="sequence caution" evidence="8">
    <conflict type="erroneous gene model prediction">
        <sequence resource="EMBL-CDS" id="CAB83125"/>
    </conflict>
</comment>
<protein>
    <recommendedName>
        <fullName evidence="7">Beta-glucosidase 8</fullName>
        <shortName evidence="7">AtBGLU8</shortName>
        <ecNumber evidence="1">3.2.1.21</ecNumber>
    </recommendedName>
</protein>
<dbReference type="EC" id="3.2.1.21" evidence="1"/>
<dbReference type="EMBL" id="AL162651">
    <property type="protein sequence ID" value="CAB83125.1"/>
    <property type="status" value="ALT_SEQ"/>
    <property type="molecule type" value="Genomic_DNA"/>
</dbReference>
<dbReference type="EMBL" id="CP002686">
    <property type="protein sequence ID" value="AEE80387.1"/>
    <property type="molecule type" value="Genomic_DNA"/>
</dbReference>
<dbReference type="EMBL" id="AK175256">
    <property type="protein sequence ID" value="BAD43019.1"/>
    <property type="molecule type" value="mRNA"/>
</dbReference>
<dbReference type="EMBL" id="AK176786">
    <property type="protein sequence ID" value="BAD44549.1"/>
    <property type="molecule type" value="mRNA"/>
</dbReference>
<dbReference type="EMBL" id="AK176833">
    <property type="protein sequence ID" value="BAD44596.1"/>
    <property type="status" value="ALT_FRAME"/>
    <property type="molecule type" value="mRNA"/>
</dbReference>
<dbReference type="PIR" id="T48064">
    <property type="entry name" value="T48064"/>
</dbReference>
<dbReference type="RefSeq" id="NP_191834.3">
    <property type="nucleotide sequence ID" value="NM_116140.4"/>
</dbReference>
<dbReference type="SMR" id="Q67XN2"/>
<dbReference type="FunCoup" id="Q67XN2">
    <property type="interactions" value="292"/>
</dbReference>
<dbReference type="STRING" id="3702.Q67XN2"/>
<dbReference type="CAZy" id="GH1">
    <property type="family name" value="Glycoside Hydrolase Family 1"/>
</dbReference>
<dbReference type="GlyCosmos" id="Q67XN2">
    <property type="glycosylation" value="6 sites, No reported glycans"/>
</dbReference>
<dbReference type="GlyGen" id="Q67XN2">
    <property type="glycosylation" value="6 sites"/>
</dbReference>
<dbReference type="iPTMnet" id="Q67XN2"/>
<dbReference type="PaxDb" id="3702-AT3G62750.1"/>
<dbReference type="ProteomicsDB" id="240332"/>
<dbReference type="EnsemblPlants" id="AT3G62750.1">
    <property type="protein sequence ID" value="AT3G62750.1"/>
    <property type="gene ID" value="AT3G62750"/>
</dbReference>
<dbReference type="GeneID" id="825450"/>
<dbReference type="Gramene" id="AT3G62750.1">
    <property type="protein sequence ID" value="AT3G62750.1"/>
    <property type="gene ID" value="AT3G62750"/>
</dbReference>
<dbReference type="KEGG" id="ath:AT3G62750"/>
<dbReference type="Araport" id="AT3G62750"/>
<dbReference type="TAIR" id="AT3G62750">
    <property type="gene designation" value="BGLU8"/>
</dbReference>
<dbReference type="eggNOG" id="KOG0626">
    <property type="taxonomic scope" value="Eukaryota"/>
</dbReference>
<dbReference type="HOGENOM" id="CLU_001859_1_0_1"/>
<dbReference type="InParanoid" id="Q67XN2"/>
<dbReference type="PhylomeDB" id="Q67XN2"/>
<dbReference type="PRO" id="PR:Q67XN2"/>
<dbReference type="Proteomes" id="UP000006548">
    <property type="component" value="Chromosome 3"/>
</dbReference>
<dbReference type="ExpressionAtlas" id="Q67XN2">
    <property type="expression patterns" value="baseline and differential"/>
</dbReference>
<dbReference type="GO" id="GO:0005777">
    <property type="term" value="C:peroxisome"/>
    <property type="evidence" value="ECO:0000314"/>
    <property type="project" value="TAIR"/>
</dbReference>
<dbReference type="GO" id="GO:0000325">
    <property type="term" value="C:plant-type vacuole"/>
    <property type="evidence" value="ECO:0007005"/>
    <property type="project" value="TAIR"/>
</dbReference>
<dbReference type="GO" id="GO:0099503">
    <property type="term" value="C:secretory vesicle"/>
    <property type="evidence" value="ECO:0007005"/>
    <property type="project" value="TAIR"/>
</dbReference>
<dbReference type="GO" id="GO:0008422">
    <property type="term" value="F:beta-glucosidase activity"/>
    <property type="evidence" value="ECO:0007669"/>
    <property type="project" value="UniProtKB-EC"/>
</dbReference>
<dbReference type="GO" id="GO:0005975">
    <property type="term" value="P:carbohydrate metabolic process"/>
    <property type="evidence" value="ECO:0007669"/>
    <property type="project" value="InterPro"/>
</dbReference>
<dbReference type="FunFam" id="3.20.20.80:FF:000069">
    <property type="entry name" value="Beta-glucosidase 1"/>
    <property type="match status" value="1"/>
</dbReference>
<dbReference type="Gene3D" id="3.20.20.80">
    <property type="entry name" value="Glycosidases"/>
    <property type="match status" value="1"/>
</dbReference>
<dbReference type="InterPro" id="IPR001360">
    <property type="entry name" value="Glyco_hydro_1"/>
</dbReference>
<dbReference type="InterPro" id="IPR033132">
    <property type="entry name" value="Glyco_hydro_1_N_CS"/>
</dbReference>
<dbReference type="InterPro" id="IPR017853">
    <property type="entry name" value="Glycoside_hydrolase_SF"/>
</dbReference>
<dbReference type="PANTHER" id="PTHR10353:SF211">
    <property type="entry name" value="BETA-GLUCOSIDASE 10-RELATED"/>
    <property type="match status" value="1"/>
</dbReference>
<dbReference type="PANTHER" id="PTHR10353">
    <property type="entry name" value="GLYCOSYL HYDROLASE"/>
    <property type="match status" value="1"/>
</dbReference>
<dbReference type="Pfam" id="PF00232">
    <property type="entry name" value="Glyco_hydro_1"/>
    <property type="match status" value="1"/>
</dbReference>
<dbReference type="PRINTS" id="PR00131">
    <property type="entry name" value="GLHYDRLASE1"/>
</dbReference>
<dbReference type="SUPFAM" id="SSF51445">
    <property type="entry name" value="(Trans)glycosidases"/>
    <property type="match status" value="1"/>
</dbReference>
<dbReference type="PROSITE" id="PS00653">
    <property type="entry name" value="GLYCOSYL_HYDROL_F1_2"/>
    <property type="match status" value="1"/>
</dbReference>
<proteinExistence type="evidence at transcript level"/>
<sequence length="497" mass="56178">MKHFNLLSIILVIVLATSYIDAFTRNDFPEDFLFGAGTSAYQWEGAANEDGRTPSVWDTTSHCYNGSNGDIACDGYHKYKEDVKLMAEMGLESFRFSISWSRLIPNGRGRINPKGLLFYKNLIKELRSHGIEPHVTLYHYDLPQSLEDEYGGWINHKIIEDFTAFADVCFREFGEDVKLWTTINEATIFAFAFYGKDVRYGNCTTGNYCMETYIAGHNMLLAHASASNLYKLKYKSKQRGSIGLSIFALGLTPYTNSKDDEIATQRAKAFLYGWMLKPLVFGDYPDEMKRTLGSRLPVFSEEESEQVKGSSDFVGIIHYTTVYVTNQPAPYIFPSSTNKDFFTDMGAYIISTGNSSSFVFDAVPWGLEGVLQHIKHRYNNPPIYILENGSPMKHDSMLQDTPRVEYIQAYIGAVLNAIKSGSDTRGYFVWSLIDLFEVQVGYKSSFGMYYVNFSDPGRKRSPKLSASWYTGFLNGTIDVASQDMTQLQRNFSGSSSL</sequence>
<evidence type="ECO:0000250" key="1">
    <source>
        <dbReference type="UniProtKB" id="O64879"/>
    </source>
</evidence>
<evidence type="ECO:0000250" key="2">
    <source>
        <dbReference type="UniProtKB" id="Q1XH05"/>
    </source>
</evidence>
<evidence type="ECO:0000250" key="3">
    <source>
        <dbReference type="UniProtKB" id="Q7XSK0"/>
    </source>
</evidence>
<evidence type="ECO:0000250" key="4">
    <source>
        <dbReference type="UniProtKB" id="Q9SPP9"/>
    </source>
</evidence>
<evidence type="ECO:0000255" key="5"/>
<evidence type="ECO:0000255" key="6">
    <source>
        <dbReference type="PROSITE-ProRule" id="PRU00498"/>
    </source>
</evidence>
<evidence type="ECO:0000303" key="7">
    <source>
    </source>
</evidence>
<evidence type="ECO:0000305" key="8"/>
<evidence type="ECO:0000312" key="9">
    <source>
        <dbReference type="Araport" id="AT3G62750"/>
    </source>
</evidence>
<evidence type="ECO:0000312" key="10">
    <source>
        <dbReference type="EMBL" id="CAB83125.1"/>
    </source>
</evidence>